<protein>
    <recommendedName>
        <fullName evidence="1">DNA replication and repair protein RecF</fullName>
    </recommendedName>
</protein>
<name>RECF_BACC0</name>
<accession>B7JJC0</accession>
<sequence>MFISEIQLKNYRNYEKLELSFEDKVNVIIGENAQGKTNLMEAIYVLAMAKSHRTSNDRELIRWDEDFGQIKGKLQKRNSSLSLELNISKKGKKAKLNQLEQQKLSQYIGVMNVVMFAPEDLNLVKGSPQVRRRFLDMELGQIAPVYLYELSQYQKVLTQRNHLLKKMQGNSKNEETMLDVFTLQLIEHGTKILRKRFEFLHLLQEWAAPIHRGISRGLEELEIVYKPSVDVSESMDLSKIKEVYYESFQSVKQREIFRGTTLIGPHRDDLQFFVNSKNVQVFGSQGQQRTTALSLKLAEIELIYSEVKEYPILLLDDVLSELDDYRQSHLLNTIQGKVQTFVTTTSVDGIEHETLKEAKTIHVTNGTVDCEIDRA</sequence>
<reference key="1">
    <citation type="submission" date="2008-10" db="EMBL/GenBank/DDBJ databases">
        <title>Genome sequence of Bacillus cereus AH820.</title>
        <authorList>
            <person name="Dodson R.J."/>
            <person name="Durkin A.S."/>
            <person name="Rosovitz M.J."/>
            <person name="Rasko D.A."/>
            <person name="Hoffmaster A."/>
            <person name="Ravel J."/>
            <person name="Sutton G."/>
        </authorList>
    </citation>
    <scope>NUCLEOTIDE SEQUENCE [LARGE SCALE GENOMIC DNA]</scope>
    <source>
        <strain>AH820</strain>
    </source>
</reference>
<feature type="chain" id="PRO_1000121086" description="DNA replication and repair protein RecF">
    <location>
        <begin position="1"/>
        <end position="375"/>
    </location>
</feature>
<feature type="binding site" evidence="1">
    <location>
        <begin position="30"/>
        <end position="37"/>
    </location>
    <ligand>
        <name>ATP</name>
        <dbReference type="ChEBI" id="CHEBI:30616"/>
    </ligand>
</feature>
<gene>
    <name evidence="1" type="primary">recF</name>
    <name type="ordered locus">BCAH820_0004</name>
</gene>
<proteinExistence type="inferred from homology"/>
<comment type="function">
    <text evidence="1">The RecF protein is involved in DNA metabolism; it is required for DNA replication and normal SOS inducibility. RecF binds preferentially to single-stranded, linear DNA. It also seems to bind ATP.</text>
</comment>
<comment type="subcellular location">
    <subcellularLocation>
        <location evidence="1">Cytoplasm</location>
    </subcellularLocation>
</comment>
<comment type="similarity">
    <text evidence="1">Belongs to the RecF family.</text>
</comment>
<dbReference type="EMBL" id="CP001283">
    <property type="protein sequence ID" value="ACK89071.1"/>
    <property type="molecule type" value="Genomic_DNA"/>
</dbReference>
<dbReference type="RefSeq" id="WP_000470753.1">
    <property type="nucleotide sequence ID" value="NC_011773.1"/>
</dbReference>
<dbReference type="SMR" id="B7JJC0"/>
<dbReference type="GeneID" id="45020038"/>
<dbReference type="KEGG" id="bcu:BCAH820_0004"/>
<dbReference type="HOGENOM" id="CLU_040267_0_1_9"/>
<dbReference type="Proteomes" id="UP000001363">
    <property type="component" value="Chromosome"/>
</dbReference>
<dbReference type="GO" id="GO:0005737">
    <property type="term" value="C:cytoplasm"/>
    <property type="evidence" value="ECO:0007669"/>
    <property type="project" value="UniProtKB-SubCell"/>
</dbReference>
<dbReference type="GO" id="GO:0005524">
    <property type="term" value="F:ATP binding"/>
    <property type="evidence" value="ECO:0007669"/>
    <property type="project" value="UniProtKB-UniRule"/>
</dbReference>
<dbReference type="GO" id="GO:0003697">
    <property type="term" value="F:single-stranded DNA binding"/>
    <property type="evidence" value="ECO:0007669"/>
    <property type="project" value="UniProtKB-UniRule"/>
</dbReference>
<dbReference type="GO" id="GO:0006260">
    <property type="term" value="P:DNA replication"/>
    <property type="evidence" value="ECO:0007669"/>
    <property type="project" value="UniProtKB-UniRule"/>
</dbReference>
<dbReference type="GO" id="GO:0000731">
    <property type="term" value="P:DNA synthesis involved in DNA repair"/>
    <property type="evidence" value="ECO:0007669"/>
    <property type="project" value="TreeGrafter"/>
</dbReference>
<dbReference type="GO" id="GO:0006302">
    <property type="term" value="P:double-strand break repair"/>
    <property type="evidence" value="ECO:0007669"/>
    <property type="project" value="TreeGrafter"/>
</dbReference>
<dbReference type="GO" id="GO:0009432">
    <property type="term" value="P:SOS response"/>
    <property type="evidence" value="ECO:0007669"/>
    <property type="project" value="UniProtKB-UniRule"/>
</dbReference>
<dbReference type="CDD" id="cd03242">
    <property type="entry name" value="ABC_RecF"/>
    <property type="match status" value="1"/>
</dbReference>
<dbReference type="FunFam" id="1.20.1050.90:FF:000002">
    <property type="entry name" value="DNA replication and repair protein RecF"/>
    <property type="match status" value="1"/>
</dbReference>
<dbReference type="FunFam" id="3.40.50.300:FF:000400">
    <property type="entry name" value="DNA replication and repair protein RecF"/>
    <property type="match status" value="1"/>
</dbReference>
<dbReference type="Gene3D" id="3.40.50.300">
    <property type="entry name" value="P-loop containing nucleotide triphosphate hydrolases"/>
    <property type="match status" value="1"/>
</dbReference>
<dbReference type="Gene3D" id="1.20.1050.90">
    <property type="entry name" value="RecF/RecN/SMC, N-terminal domain"/>
    <property type="match status" value="1"/>
</dbReference>
<dbReference type="HAMAP" id="MF_00365">
    <property type="entry name" value="RecF"/>
    <property type="match status" value="1"/>
</dbReference>
<dbReference type="InterPro" id="IPR001238">
    <property type="entry name" value="DNA-binding_RecF"/>
</dbReference>
<dbReference type="InterPro" id="IPR018078">
    <property type="entry name" value="DNA-binding_RecF_CS"/>
</dbReference>
<dbReference type="InterPro" id="IPR027417">
    <property type="entry name" value="P-loop_NTPase"/>
</dbReference>
<dbReference type="InterPro" id="IPR003395">
    <property type="entry name" value="RecF/RecN/SMC_N"/>
</dbReference>
<dbReference type="InterPro" id="IPR042174">
    <property type="entry name" value="RecF_2"/>
</dbReference>
<dbReference type="NCBIfam" id="TIGR00611">
    <property type="entry name" value="recf"/>
    <property type="match status" value="1"/>
</dbReference>
<dbReference type="PANTHER" id="PTHR32182">
    <property type="entry name" value="DNA REPLICATION AND REPAIR PROTEIN RECF"/>
    <property type="match status" value="1"/>
</dbReference>
<dbReference type="PANTHER" id="PTHR32182:SF0">
    <property type="entry name" value="DNA REPLICATION AND REPAIR PROTEIN RECF"/>
    <property type="match status" value="1"/>
</dbReference>
<dbReference type="Pfam" id="PF02463">
    <property type="entry name" value="SMC_N"/>
    <property type="match status" value="1"/>
</dbReference>
<dbReference type="SUPFAM" id="SSF52540">
    <property type="entry name" value="P-loop containing nucleoside triphosphate hydrolases"/>
    <property type="match status" value="1"/>
</dbReference>
<dbReference type="PROSITE" id="PS00617">
    <property type="entry name" value="RECF_1"/>
    <property type="match status" value="1"/>
</dbReference>
<dbReference type="PROSITE" id="PS00618">
    <property type="entry name" value="RECF_2"/>
    <property type="match status" value="1"/>
</dbReference>
<evidence type="ECO:0000255" key="1">
    <source>
        <dbReference type="HAMAP-Rule" id="MF_00365"/>
    </source>
</evidence>
<keyword id="KW-0067">ATP-binding</keyword>
<keyword id="KW-0963">Cytoplasm</keyword>
<keyword id="KW-0227">DNA damage</keyword>
<keyword id="KW-0234">DNA repair</keyword>
<keyword id="KW-0235">DNA replication</keyword>
<keyword id="KW-0238">DNA-binding</keyword>
<keyword id="KW-0547">Nucleotide-binding</keyword>
<keyword id="KW-0742">SOS response</keyword>
<organism>
    <name type="scientific">Bacillus cereus (strain AH820)</name>
    <dbReference type="NCBI Taxonomy" id="405535"/>
    <lineage>
        <taxon>Bacteria</taxon>
        <taxon>Bacillati</taxon>
        <taxon>Bacillota</taxon>
        <taxon>Bacilli</taxon>
        <taxon>Bacillales</taxon>
        <taxon>Bacillaceae</taxon>
        <taxon>Bacillus</taxon>
        <taxon>Bacillus cereus group</taxon>
    </lineage>
</organism>